<comment type="function">
    <text evidence="4 5 6 7">Component of the Mediator complex, a coactivator involved in the regulated transcription of nearly all RNA polymerase II-dependent genes. Mediator functions as a bridge to convey information from gene-specific regulatory proteins to the basal RNA polymerase II transcription machinery. The Mediator complex, having a compact conformation in its free form, is recruited to promoters by direct interactions with regulatory proteins and serves for the assembly of a functional preinitiation complex with RNA polymerase II and the general transcription factors. The Mediator complex unfolds to an extended conformation and partially surrounds RNA polymerase II, specifically interacting with the unphosphorylated form of the C-terminal domain (CTD) of RNA polymerase II. The Mediator complex dissociates from the RNA polymerase II holoenzyme and stays at the promoter when transcriptional elongation begins.</text>
</comment>
<comment type="subunit">
    <text evidence="7 8 9 10">Component of the Mediator complex, which is composed of at least 21 subunits that form three structurally distinct submodules. The Mediator head module contains MED6, MED8, MED11, SRB4/MED17, SRB5/MED18, ROX3/MED19, SRB2/MED20 and SRB6/MED22, the middle module contains MED1, MED4, NUT1/MED5, MED7, CSE2/MED9, NUT2/MED10, SRB7/MED21 and SOH1/MED31, and the tail module contains MED2, PGD1/MED3, RGR1/MED14, GAL11/MED15 and SIN4/MED16. The head and the middle modules interact directly with RNA polymerase II, whereas the elongated tail module interacts with gene-specific regulatory proteins. MED1 interacts directly with MED4 and MED7. SRB2/MED20 interacts directly with SRB4/MED17 and SRB5/MED18.</text>
</comment>
<comment type="interaction">
    <interactant intactId="EBI-18018">
        <id>P34162</id>
    </interactant>
    <interactant intactId="EBI-20932">
        <id>P38304</id>
        <label>MED8</label>
    </interactant>
    <organismsDiffer>false</organismsDiffer>
    <experiments>3</experiments>
</comment>
<comment type="interaction">
    <interactant intactId="EBI-18018">
        <id>P34162</id>
    </interactant>
    <interactant intactId="EBI-18032">
        <id>P32585</id>
        <label>SRB5</label>
    </interactant>
    <organismsDiffer>false</organismsDiffer>
    <experiments>7</experiments>
</comment>
<comment type="subcellular location">
    <subcellularLocation>
        <location evidence="1">Nucleus</location>
    </subcellularLocation>
</comment>
<comment type="miscellaneous">
    <text evidence="2">Present with 1720 molecules/cell in log phase SD medium.</text>
</comment>
<comment type="similarity">
    <text evidence="11">Belongs to the Mediator complex subunit 20 family.</text>
</comment>
<accession>P34162</accession>
<accession>D3DKY9</accession>
<dbReference type="EMBL" id="S36754">
    <property type="protein sequence ID" value="AAB22223.1"/>
    <property type="molecule type" value="Genomic_DNA"/>
</dbReference>
<dbReference type="EMBL" id="U00062">
    <property type="protein sequence ID" value="AAB68920.1"/>
    <property type="molecule type" value="Genomic_DNA"/>
</dbReference>
<dbReference type="EMBL" id="BK006934">
    <property type="protein sequence ID" value="DAA06733.1"/>
    <property type="molecule type" value="Genomic_DNA"/>
</dbReference>
<dbReference type="PIR" id="A38105">
    <property type="entry name" value="A38105"/>
</dbReference>
<dbReference type="RefSeq" id="NP_011907.1">
    <property type="nucleotide sequence ID" value="NM_001179171.1"/>
</dbReference>
<dbReference type="PDB" id="2HZM">
    <property type="method" value="X-ray"/>
    <property type="resolution" value="2.40 A"/>
    <property type="chains" value="A/C/E/G=1-210"/>
</dbReference>
<dbReference type="PDB" id="2HZS">
    <property type="method" value="X-ray"/>
    <property type="resolution" value="2.70 A"/>
    <property type="chains" value="A/C/E/G=2-210"/>
</dbReference>
<dbReference type="PDB" id="3J1O">
    <property type="method" value="EM"/>
    <property type="resolution" value="16.00 A"/>
    <property type="chains" value="M=1-210"/>
</dbReference>
<dbReference type="PDB" id="3RJ1">
    <property type="method" value="X-ray"/>
    <property type="resolution" value="4.30 A"/>
    <property type="chains" value="F/M/T=1-210"/>
</dbReference>
<dbReference type="PDB" id="4GWP">
    <property type="method" value="X-ray"/>
    <property type="resolution" value="4.20 A"/>
    <property type="chains" value="F=1-210"/>
</dbReference>
<dbReference type="PDB" id="4GWQ">
    <property type="method" value="X-ray"/>
    <property type="resolution" value="4.50 A"/>
    <property type="chains" value="F=1-210"/>
</dbReference>
<dbReference type="PDB" id="4V1O">
    <property type="method" value="EM"/>
    <property type="resolution" value="9.70 A"/>
    <property type="chains" value="Y=2-210"/>
</dbReference>
<dbReference type="PDB" id="5OQM">
    <property type="method" value="EM"/>
    <property type="resolution" value="5.80 A"/>
    <property type="chains" value="f=1-210"/>
</dbReference>
<dbReference type="PDB" id="5SVA">
    <property type="method" value="EM"/>
    <property type="resolution" value="15.30 A"/>
    <property type="chains" value="R=1-210"/>
</dbReference>
<dbReference type="PDB" id="7UI9">
    <property type="method" value="EM"/>
    <property type="resolution" value="3.30 A"/>
    <property type="chains" value="t=1-210"/>
</dbReference>
<dbReference type="PDB" id="7UIF">
    <property type="method" value="EM"/>
    <property type="resolution" value="4.60 A"/>
    <property type="chains" value="t=1-210"/>
</dbReference>
<dbReference type="PDB" id="7UIG">
    <property type="method" value="EM"/>
    <property type="resolution" value="4.30 A"/>
    <property type="chains" value="t=1-210"/>
</dbReference>
<dbReference type="PDB" id="7UIO">
    <property type="method" value="EM"/>
    <property type="resolution" value="3.30 A"/>
    <property type="chains" value="At/Bt=1-210"/>
</dbReference>
<dbReference type="PDB" id="8CEN">
    <property type="method" value="EM"/>
    <property type="resolution" value="3.00 A"/>
    <property type="chains" value="f=1-210"/>
</dbReference>
<dbReference type="PDB" id="8CEO">
    <property type="method" value="EM"/>
    <property type="resolution" value="3.60 A"/>
    <property type="chains" value="f=1-210"/>
</dbReference>
<dbReference type="PDBsum" id="2HZM"/>
<dbReference type="PDBsum" id="2HZS"/>
<dbReference type="PDBsum" id="3J1O"/>
<dbReference type="PDBsum" id="3RJ1"/>
<dbReference type="PDBsum" id="4GWP"/>
<dbReference type="PDBsum" id="4GWQ"/>
<dbReference type="PDBsum" id="4V1O"/>
<dbReference type="PDBsum" id="5OQM"/>
<dbReference type="PDBsum" id="5SVA"/>
<dbReference type="PDBsum" id="7UI9"/>
<dbReference type="PDBsum" id="7UIF"/>
<dbReference type="PDBsum" id="7UIG"/>
<dbReference type="PDBsum" id="7UIO"/>
<dbReference type="PDBsum" id="8CEN"/>
<dbReference type="PDBsum" id="8CEO"/>
<dbReference type="EMDB" id="EMD-16611"/>
<dbReference type="EMDB" id="EMD-26542"/>
<dbReference type="EMDB" id="EMD-26544"/>
<dbReference type="EMDB" id="EMD-26545"/>
<dbReference type="EMDB" id="EMD-26551"/>
<dbReference type="EMDB" id="EMD-2786"/>
<dbReference type="EMDB" id="EMD-3850"/>
<dbReference type="EMDB" id="EMD-8305"/>
<dbReference type="SMR" id="P34162"/>
<dbReference type="BioGRID" id="36473">
    <property type="interactions" value="676"/>
</dbReference>
<dbReference type="ComplexPortal" id="CPX-3226">
    <property type="entry name" value="Core mediator complex"/>
</dbReference>
<dbReference type="DIP" id="DIP-107N"/>
<dbReference type="FunCoup" id="P34162">
    <property type="interactions" value="298"/>
</dbReference>
<dbReference type="IntAct" id="P34162">
    <property type="interactions" value="32"/>
</dbReference>
<dbReference type="MINT" id="P34162"/>
<dbReference type="STRING" id="4932.YHR041C"/>
<dbReference type="PaxDb" id="4932-YHR041C"/>
<dbReference type="PeptideAtlas" id="P34162"/>
<dbReference type="EnsemblFungi" id="YHR041C_mRNA">
    <property type="protein sequence ID" value="YHR041C"/>
    <property type="gene ID" value="YHR041C"/>
</dbReference>
<dbReference type="GeneID" id="856437"/>
<dbReference type="KEGG" id="sce:YHR041C"/>
<dbReference type="AGR" id="SGD:S000001083"/>
<dbReference type="SGD" id="S000001083">
    <property type="gene designation" value="SRB2"/>
</dbReference>
<dbReference type="VEuPathDB" id="FungiDB:YHR041C"/>
<dbReference type="eggNOG" id="ENOG502RXMU">
    <property type="taxonomic scope" value="Eukaryota"/>
</dbReference>
<dbReference type="HOGENOM" id="CLU_065844_1_0_1"/>
<dbReference type="InParanoid" id="P34162"/>
<dbReference type="OMA" id="WTQRQSI"/>
<dbReference type="OrthoDB" id="1854899at2759"/>
<dbReference type="BioCyc" id="YEAST:G3O-31100-MONOMER"/>
<dbReference type="BioGRID-ORCS" id="856437">
    <property type="hits" value="1 hit in 10 CRISPR screens"/>
</dbReference>
<dbReference type="EvolutionaryTrace" id="P34162"/>
<dbReference type="PRO" id="PR:P34162"/>
<dbReference type="Proteomes" id="UP000002311">
    <property type="component" value="Chromosome VIII"/>
</dbReference>
<dbReference type="RNAct" id="P34162">
    <property type="molecule type" value="protein"/>
</dbReference>
<dbReference type="GO" id="GO:0070847">
    <property type="term" value="C:core mediator complex"/>
    <property type="evidence" value="ECO:0000314"/>
    <property type="project" value="SGD"/>
</dbReference>
<dbReference type="GO" id="GO:0016592">
    <property type="term" value="C:mediator complex"/>
    <property type="evidence" value="ECO:0000318"/>
    <property type="project" value="GO_Central"/>
</dbReference>
<dbReference type="GO" id="GO:0005634">
    <property type="term" value="C:nucleus"/>
    <property type="evidence" value="ECO:0000314"/>
    <property type="project" value="ComplexPortal"/>
</dbReference>
<dbReference type="GO" id="GO:0019904">
    <property type="term" value="F:protein domain specific binding"/>
    <property type="evidence" value="ECO:0000316"/>
    <property type="project" value="SGD"/>
</dbReference>
<dbReference type="GO" id="GO:0001094">
    <property type="term" value="F:TFIID-class transcription factor complex binding"/>
    <property type="evidence" value="ECO:0000314"/>
    <property type="project" value="SGD"/>
</dbReference>
<dbReference type="GO" id="GO:0003713">
    <property type="term" value="F:transcription coactivator activity"/>
    <property type="evidence" value="ECO:0000314"/>
    <property type="project" value="SGD"/>
</dbReference>
<dbReference type="GO" id="GO:0031669">
    <property type="term" value="P:cellular response to nutrient levels"/>
    <property type="evidence" value="ECO:0000315"/>
    <property type="project" value="SGD"/>
</dbReference>
<dbReference type="GO" id="GO:0010688">
    <property type="term" value="P:negative regulation of ribosomal protein gene transcription by RNA polymerase II"/>
    <property type="evidence" value="ECO:0000315"/>
    <property type="project" value="SGD"/>
</dbReference>
<dbReference type="GO" id="GO:0045944">
    <property type="term" value="P:positive regulation of transcription by RNA polymerase II"/>
    <property type="evidence" value="ECO:0000314"/>
    <property type="project" value="SGD"/>
</dbReference>
<dbReference type="GO" id="GO:0032968">
    <property type="term" value="P:positive regulation of transcription elongation by RNA polymerase II"/>
    <property type="evidence" value="ECO:0000314"/>
    <property type="project" value="ComplexPortal"/>
</dbReference>
<dbReference type="GO" id="GO:0060261">
    <property type="term" value="P:positive regulation of transcription initiation by RNA polymerase II"/>
    <property type="evidence" value="ECO:0000314"/>
    <property type="project" value="ComplexPortal"/>
</dbReference>
<dbReference type="GO" id="GO:0006357">
    <property type="term" value="P:regulation of transcription by RNA polymerase II"/>
    <property type="evidence" value="ECO:0000318"/>
    <property type="project" value="GO_Central"/>
</dbReference>
<dbReference type="GO" id="GO:0051123">
    <property type="term" value="P:RNA polymerase II preinitiation complex assembly"/>
    <property type="evidence" value="ECO:0000314"/>
    <property type="project" value="SGD"/>
</dbReference>
<dbReference type="FunFam" id="3.30.310.180:FF:000001">
    <property type="entry name" value="Mediator of RNA polymerase II transcription subunit 20"/>
    <property type="match status" value="1"/>
</dbReference>
<dbReference type="Gene3D" id="3.30.310.180">
    <property type="match status" value="2"/>
</dbReference>
<dbReference type="InterPro" id="IPR016532">
    <property type="entry name" value="Med20"/>
</dbReference>
<dbReference type="InterPro" id="IPR013921">
    <property type="entry name" value="Mediator_Med20"/>
</dbReference>
<dbReference type="Pfam" id="PF08612">
    <property type="entry name" value="Med20"/>
    <property type="match status" value="1"/>
</dbReference>
<dbReference type="PIRSF" id="PIRSF007945">
    <property type="entry name" value="SRB2"/>
    <property type="match status" value="1"/>
</dbReference>
<gene>
    <name type="primary">SRB2</name>
    <name type="synonym">HRS2</name>
    <name type="synonym">MED20</name>
    <name type="ordered locus">YHR041C</name>
</gene>
<name>MED20_YEAST</name>
<keyword id="KW-0002">3D-structure</keyword>
<keyword id="KW-0010">Activator</keyword>
<keyword id="KW-0539">Nucleus</keyword>
<keyword id="KW-1185">Reference proteome</keyword>
<keyword id="KW-0804">Transcription</keyword>
<keyword id="KW-0805">Transcription regulation</keyword>
<proteinExistence type="evidence at protein level"/>
<protein>
    <recommendedName>
        <fullName>Mediator of RNA polymerase II transcription subunit 20</fullName>
    </recommendedName>
    <alternativeName>
        <fullName>Hyper-recombination suppressor protein 2</fullName>
    </alternativeName>
    <alternativeName>
        <fullName>Mediator complex subunit 20</fullName>
    </alternativeName>
    <alternativeName>
        <fullName>Suppressor of RNA polymerase B 2</fullName>
    </alternativeName>
</protein>
<organism>
    <name type="scientific">Saccharomyces cerevisiae (strain ATCC 204508 / S288c)</name>
    <name type="common">Baker's yeast</name>
    <dbReference type="NCBI Taxonomy" id="559292"/>
    <lineage>
        <taxon>Eukaryota</taxon>
        <taxon>Fungi</taxon>
        <taxon>Dikarya</taxon>
        <taxon>Ascomycota</taxon>
        <taxon>Saccharomycotina</taxon>
        <taxon>Saccharomycetes</taxon>
        <taxon>Saccharomycetales</taxon>
        <taxon>Saccharomycetaceae</taxon>
        <taxon>Saccharomyces</taxon>
    </lineage>
</organism>
<feature type="chain" id="PRO_0000096374" description="Mediator of RNA polymerase II transcription subunit 20">
    <location>
        <begin position="1"/>
        <end position="210"/>
    </location>
</feature>
<feature type="mutagenesis site" description="In SRB2-1; suppresses the phenotypic defects of an RNA polymerase II CTD truncation." evidence="3">
    <original>P</original>
    <variation>H</variation>
    <location>
        <position position="14"/>
    </location>
</feature>
<feature type="strand" evidence="12">
    <location>
        <begin position="4"/>
        <end position="9"/>
    </location>
</feature>
<feature type="helix" evidence="12">
    <location>
        <begin position="16"/>
        <end position="24"/>
    </location>
</feature>
<feature type="helix" evidence="12">
    <location>
        <begin position="25"/>
        <end position="27"/>
    </location>
</feature>
<feature type="strand" evidence="13">
    <location>
        <begin position="30"/>
        <end position="32"/>
    </location>
</feature>
<feature type="strand" evidence="12">
    <location>
        <begin position="35"/>
        <end position="44"/>
    </location>
</feature>
<feature type="strand" evidence="13">
    <location>
        <begin position="51"/>
        <end position="53"/>
    </location>
</feature>
<feature type="strand" evidence="12">
    <location>
        <begin position="56"/>
        <end position="73"/>
    </location>
</feature>
<feature type="strand" evidence="12">
    <location>
        <begin position="76"/>
        <end position="81"/>
    </location>
</feature>
<feature type="helix" evidence="12">
    <location>
        <begin position="84"/>
        <end position="86"/>
    </location>
</feature>
<feature type="helix" evidence="12">
    <location>
        <begin position="89"/>
        <end position="93"/>
    </location>
</feature>
<feature type="helix" evidence="12">
    <location>
        <begin position="104"/>
        <end position="111"/>
    </location>
</feature>
<feature type="turn" evidence="12">
    <location>
        <begin position="113"/>
        <end position="115"/>
    </location>
</feature>
<feature type="strand" evidence="12">
    <location>
        <begin position="116"/>
        <end position="132"/>
    </location>
</feature>
<feature type="strand" evidence="12">
    <location>
        <begin position="135"/>
        <end position="144"/>
    </location>
</feature>
<feature type="strand" evidence="12">
    <location>
        <begin position="147"/>
        <end position="158"/>
    </location>
</feature>
<feature type="helix" evidence="12">
    <location>
        <begin position="160"/>
        <end position="162"/>
    </location>
</feature>
<feature type="helix" evidence="12">
    <location>
        <begin position="163"/>
        <end position="176"/>
    </location>
</feature>
<feature type="strand" evidence="12">
    <location>
        <begin position="183"/>
        <end position="185"/>
    </location>
</feature>
<feature type="helix" evidence="12">
    <location>
        <begin position="196"/>
        <end position="208"/>
    </location>
</feature>
<evidence type="ECO:0000269" key="1">
    <source>
    </source>
</evidence>
<evidence type="ECO:0000269" key="2">
    <source>
    </source>
</evidence>
<evidence type="ECO:0000269" key="3">
    <source>
    </source>
</evidence>
<evidence type="ECO:0000269" key="4">
    <source>
    </source>
</evidence>
<evidence type="ECO:0000269" key="5">
    <source>
    </source>
</evidence>
<evidence type="ECO:0000269" key="6">
    <source>
    </source>
</evidence>
<evidence type="ECO:0000269" key="7">
    <source>
    </source>
</evidence>
<evidence type="ECO:0000269" key="8">
    <source>
    </source>
</evidence>
<evidence type="ECO:0000269" key="9">
    <source>
    </source>
</evidence>
<evidence type="ECO:0000269" key="10">
    <source>
    </source>
</evidence>
<evidence type="ECO:0000305" key="11"/>
<evidence type="ECO:0007829" key="12">
    <source>
        <dbReference type="PDB" id="2HZM"/>
    </source>
</evidence>
<evidence type="ECO:0007829" key="13">
    <source>
        <dbReference type="PDB" id="2HZS"/>
    </source>
</evidence>
<reference key="1">
    <citation type="journal article" date="1992" name="Cell">
        <title>A novel transcription factor reveals a functional link between the RNA polymerase II CTD and TFIID.</title>
        <authorList>
            <person name="Koleske A.J."/>
            <person name="Buratowski S."/>
            <person name="Nonet M."/>
            <person name="Young R.A."/>
        </authorList>
    </citation>
    <scope>NUCLEOTIDE SEQUENCE [GENOMIC DNA]</scope>
    <scope>MUTAGENESIS OF PRO-14</scope>
</reference>
<reference key="2">
    <citation type="journal article" date="1994" name="Science">
        <title>Complete nucleotide sequence of Saccharomyces cerevisiae chromosome VIII.</title>
        <authorList>
            <person name="Johnston M."/>
            <person name="Andrews S."/>
            <person name="Brinkman R."/>
            <person name="Cooper J."/>
            <person name="Ding H."/>
            <person name="Dover J."/>
            <person name="Du Z."/>
            <person name="Favello A."/>
            <person name="Fulton L."/>
            <person name="Gattung S."/>
            <person name="Geisel C."/>
            <person name="Kirsten J."/>
            <person name="Kucaba T."/>
            <person name="Hillier L.W."/>
            <person name="Jier M."/>
            <person name="Johnston L."/>
            <person name="Langston Y."/>
            <person name="Latreille P."/>
            <person name="Louis E.J."/>
            <person name="Macri C."/>
            <person name="Mardis E."/>
            <person name="Menezes S."/>
            <person name="Mouser L."/>
            <person name="Nhan M."/>
            <person name="Rifkin L."/>
            <person name="Riles L."/>
            <person name="St Peter H."/>
            <person name="Trevaskis E."/>
            <person name="Vaughan K."/>
            <person name="Vignati D."/>
            <person name="Wilcox L."/>
            <person name="Wohldman P."/>
            <person name="Waterston R."/>
            <person name="Wilson R."/>
            <person name="Vaudin M."/>
        </authorList>
    </citation>
    <scope>NUCLEOTIDE SEQUENCE [LARGE SCALE GENOMIC DNA]</scope>
    <source>
        <strain>ATCC 204508 / S288c</strain>
    </source>
</reference>
<reference key="3">
    <citation type="journal article" date="2014" name="G3 (Bethesda)">
        <title>The reference genome sequence of Saccharomyces cerevisiae: Then and now.</title>
        <authorList>
            <person name="Engel S.R."/>
            <person name="Dietrich F.S."/>
            <person name="Fisk D.G."/>
            <person name="Binkley G."/>
            <person name="Balakrishnan R."/>
            <person name="Costanzo M.C."/>
            <person name="Dwight S.S."/>
            <person name="Hitz B.C."/>
            <person name="Karra K."/>
            <person name="Nash R.S."/>
            <person name="Weng S."/>
            <person name="Wong E.D."/>
            <person name="Lloyd P."/>
            <person name="Skrzypek M.S."/>
            <person name="Miyasato S.R."/>
            <person name="Simison M."/>
            <person name="Cherry J.M."/>
        </authorList>
    </citation>
    <scope>GENOME REANNOTATION</scope>
    <source>
        <strain>ATCC 204508 / S288c</strain>
    </source>
</reference>
<reference key="4">
    <citation type="journal article" date="1993" name="Cell">
        <title>A multisubunit complex associated with the RNA polymerase II CTD and TATA-binding protein in yeast.</title>
        <authorList>
            <person name="Thompson C.M."/>
            <person name="Koleske A.J."/>
            <person name="Chao D.M."/>
            <person name="Young R.A."/>
        </authorList>
    </citation>
    <scope>CHARACTERIZATION</scope>
</reference>
<reference key="5">
    <citation type="journal article" date="1994" name="Cell">
        <title>A multiprotein mediator of transcriptional activation and its interaction with the C-terminal repeat domain of RNA polymerase II.</title>
        <authorList>
            <person name="Kim Y.-J."/>
            <person name="Bjoerklund S."/>
            <person name="Li Y."/>
            <person name="Sayre M.H."/>
            <person name="Kornberg R.D."/>
        </authorList>
    </citation>
    <scope>COMPONENT OF MEDIATOR COMPLEX</scope>
</reference>
<reference key="6">
    <citation type="journal article" date="1998" name="Mol. Cell">
        <title>An activator target in the RNA polymerase II holoenzyme.</title>
        <authorList>
            <person name="Koh S.S."/>
            <person name="Ansari A.Z."/>
            <person name="Ptashne M."/>
            <person name="Young R.A."/>
        </authorList>
    </citation>
    <scope>INTERACTION WITH SRB4 AND SRB5</scope>
</reference>
<reference key="7">
    <citation type="journal article" date="2003" name="Nature">
        <title>Global analysis of protein localization in budding yeast.</title>
        <authorList>
            <person name="Huh W.-K."/>
            <person name="Falvo J.V."/>
            <person name="Gerke L.C."/>
            <person name="Carroll A.S."/>
            <person name="Howson R.W."/>
            <person name="Weissman J.S."/>
            <person name="O'Shea E.K."/>
        </authorList>
    </citation>
    <scope>SUBCELLULAR LOCATION [LARGE SCALE ANALYSIS]</scope>
</reference>
<reference key="8">
    <citation type="journal article" date="2003" name="Nature">
        <title>Global analysis of protein expression in yeast.</title>
        <authorList>
            <person name="Ghaemmaghami S."/>
            <person name="Huh W.-K."/>
            <person name="Bower K."/>
            <person name="Howson R.W."/>
            <person name="Belle A."/>
            <person name="Dephoure N."/>
            <person name="O'Shea E.K."/>
            <person name="Weissman J.S."/>
        </authorList>
    </citation>
    <scope>LEVEL OF PROTEIN EXPRESSION [LARGE SCALE ANALYSIS]</scope>
</reference>
<reference key="9">
    <citation type="journal article" date="2004" name="Mol. Cell">
        <title>A unified nomenclature for protein subunits of mediator complexes linking transcriptional regulators to RNA polymerase II.</title>
        <authorList>
            <person name="Bourbon H.-M."/>
            <person name="Aguilera A."/>
            <person name="Ansari A.Z."/>
            <person name="Asturias F.J."/>
            <person name="Berk A.J."/>
            <person name="Bjoerklund S."/>
            <person name="Blackwell T.K."/>
            <person name="Borggrefe T."/>
            <person name="Carey M."/>
            <person name="Carlson M."/>
            <person name="Conaway J.W."/>
            <person name="Conaway R.C."/>
            <person name="Emmons S.W."/>
            <person name="Fondell J.D."/>
            <person name="Freedman L.P."/>
            <person name="Fukasawa T."/>
            <person name="Gustafsson C.M."/>
            <person name="Han M."/>
            <person name="He X."/>
            <person name="Herman P.K."/>
            <person name="Hinnebusch A.G."/>
            <person name="Holmberg S."/>
            <person name="Holstege F.C.P."/>
            <person name="Jaehning J.A."/>
            <person name="Kim Y.-J."/>
            <person name="Kuras L."/>
            <person name="Leutz A."/>
            <person name="Lis J.T."/>
            <person name="Meisterernest M."/>
            <person name="Naeaer A.M."/>
            <person name="Nasmyth K."/>
            <person name="Parvin J.D."/>
            <person name="Ptashne M."/>
            <person name="Reinberg D."/>
            <person name="Ronne H."/>
            <person name="Sadowski I."/>
            <person name="Sakurai H."/>
            <person name="Sipiczki M."/>
            <person name="Sternberg P.W."/>
            <person name="Stillman D.J."/>
            <person name="Strich R."/>
            <person name="Struhl K."/>
            <person name="Svejstrup J.Q."/>
            <person name="Tuck S."/>
            <person name="Winston F."/>
            <person name="Roeder R.G."/>
            <person name="Kornberg R.D."/>
        </authorList>
    </citation>
    <scope>NOMENCLATURE</scope>
</reference>
<reference key="10">
    <citation type="journal article" date="2004" name="Nucleic Acids Res.">
        <title>A high resolution protein interaction map of the yeast Mediator complex.</title>
        <authorList>
            <person name="Guglielmi B."/>
            <person name="van Berkum N.L."/>
            <person name="Klapholz B."/>
            <person name="Bijma T."/>
            <person name="Boube M."/>
            <person name="Boschiero C."/>
            <person name="Bourbon H.-M."/>
            <person name="Holstege F.C.P."/>
            <person name="Werner M."/>
        </authorList>
    </citation>
    <scope>TOPOLOGY OF THE MEDIATOR COMPLEX</scope>
</reference>
<reference key="11">
    <citation type="journal article" date="2005" name="J. Biol. Chem.">
        <title>Preponderance of free mediator in the yeast Saccharomyces cerevisiae.</title>
        <authorList>
            <person name="Takagi Y."/>
            <person name="Chadick J.Z."/>
            <person name="Davis J.A."/>
            <person name="Asturias F.J."/>
        </authorList>
    </citation>
    <scope>CHARACTERIZATION OF THE MEDIATOR COMPLEX</scope>
</reference>
<reference key="12">
    <citation type="journal article" date="2005" name="J. Biol. Chem.">
        <title>Mediator and TFIIH govern carboxyl-terminal domain-dependent transcription in yeast extracts.</title>
        <authorList>
            <person name="Nair D."/>
            <person name="Kim Y."/>
            <person name="Myers L.C."/>
        </authorList>
    </citation>
    <scope>FUNCTION OF THE MEDIATOR COMPLEX</scope>
</reference>
<reference key="13">
    <citation type="journal article" date="2005" name="Mol. Cell">
        <title>Mediator expression profiling epistasis reveals a signal transduction pathway with antagonistic submodules and highly specific downstream targets.</title>
        <authorList>
            <person name="van de Peppel J."/>
            <person name="Kettelarij N."/>
            <person name="van Bakel H."/>
            <person name="Kockelkorn T.T.J.P."/>
            <person name="van Leenen D."/>
            <person name="Holstege F.C.P."/>
        </authorList>
    </citation>
    <scope>FUNCTION</scope>
</reference>
<reference key="14">
    <citation type="journal article" date="2006" name="J. Biol. Chem.">
        <title>Mediator as a general transcription factor.</title>
        <authorList>
            <person name="Takagi Y."/>
            <person name="Kornberg R.D."/>
        </authorList>
    </citation>
    <scope>FUNCTION OF THE MEDIATOR COMPLEX</scope>
</reference>
<reference key="15">
    <citation type="journal article" date="2007" name="J. Biol. Chem.">
        <title>Med19(Rox3) regulates intermodule interactions in the Saccharomyces cerevisiae mediator complex.</title>
        <authorList>
            <person name="Baidoobonso S.M."/>
            <person name="Guidi B.W."/>
            <person name="Myers L.C."/>
        </authorList>
    </citation>
    <scope>CHARACTERIZATION OF THE MEDIATOR COMPLEX</scope>
    <scope>INTERACTION OF THE MEDIATOR COMPLEX WITH RNA POLYMERASE II</scope>
</reference>
<reference key="16">
    <citation type="journal article" date="2012" name="Proc. Natl. Acad. Sci. U.S.A.">
        <title>N-terminal acetylome analyses and functional insights of the N-terminal acetyltransferase NatB.</title>
        <authorList>
            <person name="Van Damme P."/>
            <person name="Lasa M."/>
            <person name="Polevoda B."/>
            <person name="Gazquez C."/>
            <person name="Elosegui-Artola A."/>
            <person name="Kim D.S."/>
            <person name="De Juan-Pardo E."/>
            <person name="Demeyer K."/>
            <person name="Hole K."/>
            <person name="Larrea E."/>
            <person name="Timmerman E."/>
            <person name="Prieto J."/>
            <person name="Arnesen T."/>
            <person name="Sherman F."/>
            <person name="Gevaert K."/>
            <person name="Aldabe R."/>
        </authorList>
    </citation>
    <scope>IDENTIFICATION BY MASS SPECTROMETRY [LARGE SCALE ANALYSIS]</scope>
</reference>
<reference key="17">
    <citation type="journal article" date="2002" name="Mol. Cell">
        <title>Structure of the yeast RNA polymerase II holoenzyme: mediator conformation and polymerase interaction.</title>
        <authorList>
            <person name="Davis J.A."/>
            <person name="Takagi Y."/>
            <person name="Kornberg R.D."/>
            <person name="Asturias F.J."/>
        </authorList>
    </citation>
    <scope>ELECTRON MICROSCOPY OF MEDIATOR COMPLEX IN COMPLEX WITH RNA POLYMERASE II</scope>
</reference>
<reference key="18">
    <citation type="journal article" date="2006" name="Mol. Cell">
        <title>Head module control of mediator interactions.</title>
        <authorList>
            <person name="Takagi Y."/>
            <person name="Calero G."/>
            <person name="Komori H."/>
            <person name="Brown J.A."/>
            <person name="Ehrensberger A.H."/>
            <person name="Hudmon A."/>
            <person name="Asturias F.J."/>
            <person name="Kornberg R.D."/>
        </authorList>
    </citation>
    <scope>ELECTRON MICROSCOPY OF THE MEDIATOR COMPLEX HEAD MODULE</scope>
    <scope>FUNCTION OF THE MEDIATOR COMPLEX HEAD MODULE</scope>
    <scope>INTERACTION OF THE MEDIATOR COMPLEX HEAD MODULE WITH RNA POLYMERASE II AND TFIIF</scope>
    <scope>INTERACTION WITH MED8; SRB4 AND SRB5</scope>
</reference>
<reference key="19">
    <citation type="journal article" date="2006" name="Nat. Struct. Mol. Biol.">
        <title>Structure and TBP binding of the Mediator head subcomplex Med8-Med18-Med20.</title>
        <authorList>
            <person name="Lariviere L."/>
            <person name="Geiger S."/>
            <person name="Hoeppner S."/>
            <person name="Roether S."/>
            <person name="Straesser K."/>
            <person name="Cramer P."/>
        </authorList>
    </citation>
    <scope>X-RAY CRYSTALLOGRAPHY (2.7 ANGSTROMS) OF 2-210 IN COMPLEX WITH MED8 AND SRB5</scope>
    <scope>X-RAY CRYSTALLOGRAPHY (2.4 ANGSTROMS) IN COMPLEX WITH SRB5</scope>
</reference>
<sequence>MGKSAVIFVERATPATLTELKDALSNSILSVRDPWSIDFRTYRCSIKNLPADVSKLMYSITFHHHGRQTVLIKDNSAMVTTAAAADIPPALVFNGSSTGVPESIDTILSSKLSNIWMQRQLIKGDAGETLILDGLTVRLVNLFSSTGFKGLLIELQADEAGEFETKIAGIEGHLAEIRAKEYKTSSDSLGPDTSNEICDLAYQYVRALEL</sequence>